<accession>Q83K81</accession>
<accession>Q7C0K9</accession>
<feature type="chain" id="PRO_0000313436" description="DNA ligase">
    <location>
        <begin position="1"/>
        <end position="671"/>
    </location>
</feature>
<feature type="domain" description="BRCT" evidence="1">
    <location>
        <begin position="593"/>
        <end position="671"/>
    </location>
</feature>
<feature type="active site" description="N6-AMP-lysine intermediate" evidence="1">
    <location>
        <position position="115"/>
    </location>
</feature>
<feature type="binding site" evidence="1">
    <location>
        <begin position="32"/>
        <end position="36"/>
    </location>
    <ligand>
        <name>NAD(+)</name>
        <dbReference type="ChEBI" id="CHEBI:57540"/>
    </ligand>
</feature>
<feature type="binding site" evidence="1">
    <location>
        <begin position="81"/>
        <end position="82"/>
    </location>
    <ligand>
        <name>NAD(+)</name>
        <dbReference type="ChEBI" id="CHEBI:57540"/>
    </ligand>
</feature>
<feature type="binding site" evidence="1">
    <location>
        <position position="113"/>
    </location>
    <ligand>
        <name>NAD(+)</name>
        <dbReference type="ChEBI" id="CHEBI:57540"/>
    </ligand>
</feature>
<feature type="binding site" evidence="1">
    <location>
        <position position="136"/>
    </location>
    <ligand>
        <name>NAD(+)</name>
        <dbReference type="ChEBI" id="CHEBI:57540"/>
    </ligand>
</feature>
<feature type="binding site" evidence="1">
    <location>
        <position position="173"/>
    </location>
    <ligand>
        <name>NAD(+)</name>
        <dbReference type="ChEBI" id="CHEBI:57540"/>
    </ligand>
</feature>
<feature type="binding site" evidence="1">
    <location>
        <position position="290"/>
    </location>
    <ligand>
        <name>NAD(+)</name>
        <dbReference type="ChEBI" id="CHEBI:57540"/>
    </ligand>
</feature>
<feature type="binding site" evidence="1">
    <location>
        <position position="314"/>
    </location>
    <ligand>
        <name>NAD(+)</name>
        <dbReference type="ChEBI" id="CHEBI:57540"/>
    </ligand>
</feature>
<feature type="binding site" evidence="1">
    <location>
        <position position="408"/>
    </location>
    <ligand>
        <name>Zn(2+)</name>
        <dbReference type="ChEBI" id="CHEBI:29105"/>
    </ligand>
</feature>
<feature type="binding site" evidence="1">
    <location>
        <position position="411"/>
    </location>
    <ligand>
        <name>Zn(2+)</name>
        <dbReference type="ChEBI" id="CHEBI:29105"/>
    </ligand>
</feature>
<feature type="binding site" evidence="1">
    <location>
        <position position="426"/>
    </location>
    <ligand>
        <name>Zn(2+)</name>
        <dbReference type="ChEBI" id="CHEBI:29105"/>
    </ligand>
</feature>
<feature type="binding site" evidence="1">
    <location>
        <position position="432"/>
    </location>
    <ligand>
        <name>Zn(2+)</name>
        <dbReference type="ChEBI" id="CHEBI:29105"/>
    </ligand>
</feature>
<evidence type="ECO:0000255" key="1">
    <source>
        <dbReference type="HAMAP-Rule" id="MF_01588"/>
    </source>
</evidence>
<protein>
    <recommendedName>
        <fullName evidence="1">DNA ligase</fullName>
        <ecNumber evidence="1">6.5.1.2</ecNumber>
    </recommendedName>
    <alternativeName>
        <fullName evidence="1">Polydeoxyribonucleotide synthase [NAD(+)]</fullName>
    </alternativeName>
</protein>
<organism>
    <name type="scientific">Shigella flexneri</name>
    <dbReference type="NCBI Taxonomy" id="623"/>
    <lineage>
        <taxon>Bacteria</taxon>
        <taxon>Pseudomonadati</taxon>
        <taxon>Pseudomonadota</taxon>
        <taxon>Gammaproteobacteria</taxon>
        <taxon>Enterobacterales</taxon>
        <taxon>Enterobacteriaceae</taxon>
        <taxon>Shigella</taxon>
    </lineage>
</organism>
<reference key="1">
    <citation type="journal article" date="2002" name="Nucleic Acids Res.">
        <title>Genome sequence of Shigella flexneri 2a: insights into pathogenicity through comparison with genomes of Escherichia coli K12 and O157.</title>
        <authorList>
            <person name="Jin Q."/>
            <person name="Yuan Z."/>
            <person name="Xu J."/>
            <person name="Wang Y."/>
            <person name="Shen Y."/>
            <person name="Lu W."/>
            <person name="Wang J."/>
            <person name="Liu H."/>
            <person name="Yang J."/>
            <person name="Yang F."/>
            <person name="Zhang X."/>
            <person name="Zhang J."/>
            <person name="Yang G."/>
            <person name="Wu H."/>
            <person name="Qu D."/>
            <person name="Dong J."/>
            <person name="Sun L."/>
            <person name="Xue Y."/>
            <person name="Zhao A."/>
            <person name="Gao Y."/>
            <person name="Zhu J."/>
            <person name="Kan B."/>
            <person name="Ding K."/>
            <person name="Chen S."/>
            <person name="Cheng H."/>
            <person name="Yao Z."/>
            <person name="He B."/>
            <person name="Chen R."/>
            <person name="Ma D."/>
            <person name="Qiang B."/>
            <person name="Wen Y."/>
            <person name="Hou Y."/>
            <person name="Yu J."/>
        </authorList>
    </citation>
    <scope>NUCLEOTIDE SEQUENCE [LARGE SCALE GENOMIC DNA]</scope>
    <source>
        <strain>301 / Serotype 2a</strain>
    </source>
</reference>
<reference key="2">
    <citation type="journal article" date="2003" name="Infect. Immun.">
        <title>Complete genome sequence and comparative genomics of Shigella flexneri serotype 2a strain 2457T.</title>
        <authorList>
            <person name="Wei J."/>
            <person name="Goldberg M.B."/>
            <person name="Burland V."/>
            <person name="Venkatesan M.M."/>
            <person name="Deng W."/>
            <person name="Fournier G."/>
            <person name="Mayhew G.F."/>
            <person name="Plunkett G. III"/>
            <person name="Rose D.J."/>
            <person name="Darling A."/>
            <person name="Mau B."/>
            <person name="Perna N.T."/>
            <person name="Payne S.M."/>
            <person name="Runyen-Janecky L.J."/>
            <person name="Zhou S."/>
            <person name="Schwartz D.C."/>
            <person name="Blattner F.R."/>
        </authorList>
    </citation>
    <scope>NUCLEOTIDE SEQUENCE [LARGE SCALE GENOMIC DNA]</scope>
    <source>
        <strain>ATCC 700930 / 2457T / Serotype 2a</strain>
    </source>
</reference>
<sequence length="671" mass="73623">MESIEQQLTELRTTLCHHEYLYHVMDAPEIPDAEYDRLMRELRELETKHPELITPDSPTQRVGAAPLAAFSQIRHEVPMLSLDNVFDEESFLAFNKRVQDRLKNNEKVTWCCELKLDGLAVSILYENGVLVSAATRGDGTTGEDITSNVRTIRAIPLKLHGENIPARLEVRGEVFLPQAGFEKINEDARRTGGKVFANPRNAAAGSLRQLDPRITAKRPLTFFCYGVGVLEGGELPDTHLGRLLQFKKWGVPVSDRVTLCESAEEVLAFYHKVEEDRPTLGFDIDGVVIKVNSLEQQEQLGFVARAPRWAVAFKFPAQEQMTFVRDVEFQVGRTGAITPVARLEPVHVAGVLVSNATLHNADEIERLGLRIGDKVVIRRAGDVIPQVVNVVLSERPEDTREVVFPTHCPVCGSDVERVEGEAVARCTGGLICGAQRKESLKHFVSRRAMDVDGMGDKIIDQLVEKEYVHTPADLFKLTAGKLTGLERMGPKLAQNVVNALEKAKETTFARFLYALGIREVGEATAAGLAAYFGTLEALEAASIEELQKVPDVGIVVASHVHNFFAEESNRNVISELLAEGVHWPAPIVINAEEIDSPFAGKTVVLTGSLSQMSRDDAKARLVELGAKVAGSVSKKTDLVIAGEAAGSKLAKAQELGIEVIDEAEMLRLLGS</sequence>
<proteinExistence type="inferred from homology"/>
<keyword id="KW-0227">DNA damage</keyword>
<keyword id="KW-0234">DNA repair</keyword>
<keyword id="KW-0235">DNA replication</keyword>
<keyword id="KW-0436">Ligase</keyword>
<keyword id="KW-0460">Magnesium</keyword>
<keyword id="KW-0464">Manganese</keyword>
<keyword id="KW-0479">Metal-binding</keyword>
<keyword id="KW-0520">NAD</keyword>
<keyword id="KW-1185">Reference proteome</keyword>
<keyword id="KW-0862">Zinc</keyword>
<gene>
    <name evidence="1" type="primary">ligA</name>
    <name type="ordered locus">SF2466</name>
    <name type="ordered locus">S2612</name>
</gene>
<comment type="function">
    <text evidence="1">DNA ligase that catalyzes the formation of phosphodiester linkages between 5'-phosphoryl and 3'-hydroxyl groups in double-stranded DNA using NAD as a coenzyme and as the energy source for the reaction. It is essential for DNA replication and repair of damaged DNA.</text>
</comment>
<comment type="catalytic activity">
    <reaction evidence="1">
        <text>NAD(+) + (deoxyribonucleotide)n-3'-hydroxyl + 5'-phospho-(deoxyribonucleotide)m = (deoxyribonucleotide)n+m + AMP + beta-nicotinamide D-nucleotide.</text>
        <dbReference type="EC" id="6.5.1.2"/>
    </reaction>
</comment>
<comment type="cofactor">
    <cofactor evidence="1">
        <name>Mg(2+)</name>
        <dbReference type="ChEBI" id="CHEBI:18420"/>
    </cofactor>
    <cofactor evidence="1">
        <name>Mn(2+)</name>
        <dbReference type="ChEBI" id="CHEBI:29035"/>
    </cofactor>
</comment>
<comment type="similarity">
    <text evidence="1">Belongs to the NAD-dependent DNA ligase family. LigA subfamily.</text>
</comment>
<name>DNLJ_SHIFL</name>
<dbReference type="EC" id="6.5.1.2" evidence="1"/>
<dbReference type="EMBL" id="AE005674">
    <property type="protein sequence ID" value="AAN43973.1"/>
    <property type="molecule type" value="Genomic_DNA"/>
</dbReference>
<dbReference type="EMBL" id="AE014073">
    <property type="protein sequence ID" value="AAP17786.1"/>
    <property type="molecule type" value="Genomic_DNA"/>
</dbReference>
<dbReference type="RefSeq" id="NP_708266.1">
    <property type="nucleotide sequence ID" value="NC_004337.2"/>
</dbReference>
<dbReference type="RefSeq" id="WP_000443652.1">
    <property type="nucleotide sequence ID" value="NZ_WPGW01000027.1"/>
</dbReference>
<dbReference type="SMR" id="Q83K81"/>
<dbReference type="STRING" id="198214.SF2466"/>
<dbReference type="PaxDb" id="198214-SF2466"/>
<dbReference type="GeneID" id="1025587"/>
<dbReference type="KEGG" id="sfl:SF2466"/>
<dbReference type="KEGG" id="sfx:S2612"/>
<dbReference type="PATRIC" id="fig|198214.7.peg.2947"/>
<dbReference type="HOGENOM" id="CLU_007764_2_1_6"/>
<dbReference type="Proteomes" id="UP000001006">
    <property type="component" value="Chromosome"/>
</dbReference>
<dbReference type="Proteomes" id="UP000002673">
    <property type="component" value="Chromosome"/>
</dbReference>
<dbReference type="GO" id="GO:0005829">
    <property type="term" value="C:cytosol"/>
    <property type="evidence" value="ECO:0007669"/>
    <property type="project" value="TreeGrafter"/>
</dbReference>
<dbReference type="GO" id="GO:0003677">
    <property type="term" value="F:DNA binding"/>
    <property type="evidence" value="ECO:0007669"/>
    <property type="project" value="InterPro"/>
</dbReference>
<dbReference type="GO" id="GO:0003911">
    <property type="term" value="F:DNA ligase (NAD+) activity"/>
    <property type="evidence" value="ECO:0007669"/>
    <property type="project" value="UniProtKB-UniRule"/>
</dbReference>
<dbReference type="GO" id="GO:0046872">
    <property type="term" value="F:metal ion binding"/>
    <property type="evidence" value="ECO:0007669"/>
    <property type="project" value="UniProtKB-KW"/>
</dbReference>
<dbReference type="GO" id="GO:0006281">
    <property type="term" value="P:DNA repair"/>
    <property type="evidence" value="ECO:0007669"/>
    <property type="project" value="UniProtKB-KW"/>
</dbReference>
<dbReference type="GO" id="GO:0006260">
    <property type="term" value="P:DNA replication"/>
    <property type="evidence" value="ECO:0007669"/>
    <property type="project" value="UniProtKB-KW"/>
</dbReference>
<dbReference type="CDD" id="cd17748">
    <property type="entry name" value="BRCT_DNA_ligase_like"/>
    <property type="match status" value="1"/>
</dbReference>
<dbReference type="CDD" id="cd00114">
    <property type="entry name" value="LIGANc"/>
    <property type="match status" value="1"/>
</dbReference>
<dbReference type="FunFam" id="1.10.150.20:FF:000006">
    <property type="entry name" value="DNA ligase"/>
    <property type="match status" value="1"/>
</dbReference>
<dbReference type="FunFam" id="1.10.150.20:FF:000007">
    <property type="entry name" value="DNA ligase"/>
    <property type="match status" value="1"/>
</dbReference>
<dbReference type="FunFam" id="1.10.287.610:FF:000002">
    <property type="entry name" value="DNA ligase"/>
    <property type="match status" value="1"/>
</dbReference>
<dbReference type="FunFam" id="2.40.50.140:FF:000012">
    <property type="entry name" value="DNA ligase"/>
    <property type="match status" value="1"/>
</dbReference>
<dbReference type="FunFam" id="3.30.470.30:FF:000001">
    <property type="entry name" value="DNA ligase"/>
    <property type="match status" value="1"/>
</dbReference>
<dbReference type="FunFam" id="3.40.50.10190:FF:000004">
    <property type="entry name" value="DNA ligase"/>
    <property type="match status" value="1"/>
</dbReference>
<dbReference type="FunFam" id="6.20.10.30:FF:000001">
    <property type="entry name" value="DNA ligase"/>
    <property type="match status" value="1"/>
</dbReference>
<dbReference type="Gene3D" id="6.20.10.30">
    <property type="match status" value="1"/>
</dbReference>
<dbReference type="Gene3D" id="1.10.150.20">
    <property type="entry name" value="5' to 3' exonuclease, C-terminal subdomain"/>
    <property type="match status" value="2"/>
</dbReference>
<dbReference type="Gene3D" id="3.40.50.10190">
    <property type="entry name" value="BRCT domain"/>
    <property type="match status" value="1"/>
</dbReference>
<dbReference type="Gene3D" id="3.30.470.30">
    <property type="entry name" value="DNA ligase/mRNA capping enzyme"/>
    <property type="match status" value="1"/>
</dbReference>
<dbReference type="Gene3D" id="1.10.287.610">
    <property type="entry name" value="Helix hairpin bin"/>
    <property type="match status" value="1"/>
</dbReference>
<dbReference type="Gene3D" id="2.40.50.140">
    <property type="entry name" value="Nucleic acid-binding proteins"/>
    <property type="match status" value="1"/>
</dbReference>
<dbReference type="HAMAP" id="MF_01588">
    <property type="entry name" value="DNA_ligase_A"/>
    <property type="match status" value="1"/>
</dbReference>
<dbReference type="InterPro" id="IPR001357">
    <property type="entry name" value="BRCT_dom"/>
</dbReference>
<dbReference type="InterPro" id="IPR036420">
    <property type="entry name" value="BRCT_dom_sf"/>
</dbReference>
<dbReference type="InterPro" id="IPR041663">
    <property type="entry name" value="DisA/LigA_HHH"/>
</dbReference>
<dbReference type="InterPro" id="IPR001679">
    <property type="entry name" value="DNA_ligase"/>
</dbReference>
<dbReference type="InterPro" id="IPR018239">
    <property type="entry name" value="DNA_ligase_AS"/>
</dbReference>
<dbReference type="InterPro" id="IPR033136">
    <property type="entry name" value="DNA_ligase_CS"/>
</dbReference>
<dbReference type="InterPro" id="IPR013839">
    <property type="entry name" value="DNAligase_adenylation"/>
</dbReference>
<dbReference type="InterPro" id="IPR013840">
    <property type="entry name" value="DNAligase_N"/>
</dbReference>
<dbReference type="InterPro" id="IPR003583">
    <property type="entry name" value="Hlx-hairpin-Hlx_DNA-bd_motif"/>
</dbReference>
<dbReference type="InterPro" id="IPR012340">
    <property type="entry name" value="NA-bd_OB-fold"/>
</dbReference>
<dbReference type="InterPro" id="IPR004150">
    <property type="entry name" value="NAD_DNA_ligase_OB"/>
</dbReference>
<dbReference type="InterPro" id="IPR010994">
    <property type="entry name" value="RuvA_2-like"/>
</dbReference>
<dbReference type="InterPro" id="IPR004149">
    <property type="entry name" value="Znf_DNAligase_C4"/>
</dbReference>
<dbReference type="NCBIfam" id="TIGR00575">
    <property type="entry name" value="dnlj"/>
    <property type="match status" value="1"/>
</dbReference>
<dbReference type="NCBIfam" id="NF005932">
    <property type="entry name" value="PRK07956.1"/>
    <property type="match status" value="1"/>
</dbReference>
<dbReference type="PANTHER" id="PTHR23389">
    <property type="entry name" value="CHROMOSOME TRANSMISSION FIDELITY FACTOR 18"/>
    <property type="match status" value="1"/>
</dbReference>
<dbReference type="PANTHER" id="PTHR23389:SF9">
    <property type="entry name" value="DNA LIGASE"/>
    <property type="match status" value="1"/>
</dbReference>
<dbReference type="Pfam" id="PF00533">
    <property type="entry name" value="BRCT"/>
    <property type="match status" value="1"/>
</dbReference>
<dbReference type="Pfam" id="PF01653">
    <property type="entry name" value="DNA_ligase_aden"/>
    <property type="match status" value="1"/>
</dbReference>
<dbReference type="Pfam" id="PF03120">
    <property type="entry name" value="DNA_ligase_OB"/>
    <property type="match status" value="1"/>
</dbReference>
<dbReference type="Pfam" id="PF03119">
    <property type="entry name" value="DNA_ligase_ZBD"/>
    <property type="match status" value="1"/>
</dbReference>
<dbReference type="Pfam" id="PF12826">
    <property type="entry name" value="HHH_2"/>
    <property type="match status" value="1"/>
</dbReference>
<dbReference type="Pfam" id="PF14520">
    <property type="entry name" value="HHH_5"/>
    <property type="match status" value="1"/>
</dbReference>
<dbReference type="Pfam" id="PF22745">
    <property type="entry name" value="Nlig-Ia"/>
    <property type="match status" value="1"/>
</dbReference>
<dbReference type="PIRSF" id="PIRSF001604">
    <property type="entry name" value="LigA"/>
    <property type="match status" value="1"/>
</dbReference>
<dbReference type="SMART" id="SM00292">
    <property type="entry name" value="BRCT"/>
    <property type="match status" value="1"/>
</dbReference>
<dbReference type="SMART" id="SM00278">
    <property type="entry name" value="HhH1"/>
    <property type="match status" value="4"/>
</dbReference>
<dbReference type="SMART" id="SM00532">
    <property type="entry name" value="LIGANc"/>
    <property type="match status" value="1"/>
</dbReference>
<dbReference type="SUPFAM" id="SSF52113">
    <property type="entry name" value="BRCT domain"/>
    <property type="match status" value="1"/>
</dbReference>
<dbReference type="SUPFAM" id="SSF56091">
    <property type="entry name" value="DNA ligase/mRNA capping enzyme, catalytic domain"/>
    <property type="match status" value="1"/>
</dbReference>
<dbReference type="SUPFAM" id="SSF50249">
    <property type="entry name" value="Nucleic acid-binding proteins"/>
    <property type="match status" value="1"/>
</dbReference>
<dbReference type="SUPFAM" id="SSF47781">
    <property type="entry name" value="RuvA domain 2-like"/>
    <property type="match status" value="1"/>
</dbReference>
<dbReference type="PROSITE" id="PS50172">
    <property type="entry name" value="BRCT"/>
    <property type="match status" value="1"/>
</dbReference>
<dbReference type="PROSITE" id="PS01055">
    <property type="entry name" value="DNA_LIGASE_N1"/>
    <property type="match status" value="1"/>
</dbReference>
<dbReference type="PROSITE" id="PS01056">
    <property type="entry name" value="DNA_LIGASE_N2"/>
    <property type="match status" value="1"/>
</dbReference>